<feature type="chain" id="PRO_0000220641" description="Nitrogen permease regulator 3-like protein">
    <location>
        <begin position="1"/>
        <end position="585"/>
    </location>
</feature>
<feature type="region of interest" description="Disordered" evidence="1">
    <location>
        <begin position="117"/>
        <end position="157"/>
    </location>
</feature>
<feature type="compositionally biased region" description="Polar residues" evidence="1">
    <location>
        <begin position="128"/>
        <end position="138"/>
    </location>
</feature>
<feature type="compositionally biased region" description="Low complexity" evidence="1">
    <location>
        <begin position="148"/>
        <end position="157"/>
    </location>
</feature>
<dbReference type="EMBL" id="CU329671">
    <property type="protein sequence ID" value="CAC05246.1"/>
    <property type="molecule type" value="Genomic_DNA"/>
</dbReference>
<dbReference type="RefSeq" id="NP_596792.1">
    <property type="nucleotide sequence ID" value="NM_001023812.2"/>
</dbReference>
<dbReference type="SMR" id="Q9HGM7"/>
<dbReference type="BioGRID" id="277588">
    <property type="interactions" value="6"/>
</dbReference>
<dbReference type="FunCoup" id="Q9HGM7">
    <property type="interactions" value="114"/>
</dbReference>
<dbReference type="STRING" id="284812.Q9HGM7"/>
<dbReference type="iPTMnet" id="Q9HGM7"/>
<dbReference type="PaxDb" id="4896-SPBC543.04.1"/>
<dbReference type="EnsemblFungi" id="SPBC543.04.1">
    <property type="protein sequence ID" value="SPBC543.04.1:pep"/>
    <property type="gene ID" value="SPBC543.04"/>
</dbReference>
<dbReference type="PomBase" id="SPBC543.04"/>
<dbReference type="VEuPathDB" id="FungiDB:SPBC543.04"/>
<dbReference type="eggNOG" id="KOG3830">
    <property type="taxonomic scope" value="Eukaryota"/>
</dbReference>
<dbReference type="HOGENOM" id="CLU_014314_1_0_1"/>
<dbReference type="InParanoid" id="Q9HGM7"/>
<dbReference type="OMA" id="CNLAFRY"/>
<dbReference type="PhylomeDB" id="Q9HGM7"/>
<dbReference type="PRO" id="PR:Q9HGM7"/>
<dbReference type="Proteomes" id="UP000002485">
    <property type="component" value="Chromosome II"/>
</dbReference>
<dbReference type="GO" id="GO:0005829">
    <property type="term" value="C:cytosol"/>
    <property type="evidence" value="ECO:0007005"/>
    <property type="project" value="PomBase"/>
</dbReference>
<dbReference type="GO" id="GO:1990130">
    <property type="term" value="C:GATOR1 complex"/>
    <property type="evidence" value="ECO:0000315"/>
    <property type="project" value="PomBase"/>
</dbReference>
<dbReference type="GO" id="GO:0005774">
    <property type="term" value="C:vacuolar membrane"/>
    <property type="evidence" value="ECO:0000269"/>
    <property type="project" value="PomBase"/>
</dbReference>
<dbReference type="GO" id="GO:0034198">
    <property type="term" value="P:cellular response to amino acid starvation"/>
    <property type="evidence" value="ECO:0000318"/>
    <property type="project" value="GO_Central"/>
</dbReference>
<dbReference type="GO" id="GO:1904262">
    <property type="term" value="P:negative regulation of TORC1 signaling"/>
    <property type="evidence" value="ECO:0000315"/>
    <property type="project" value="PomBase"/>
</dbReference>
<dbReference type="GO" id="GO:0010508">
    <property type="term" value="P:positive regulation of autophagy"/>
    <property type="evidence" value="ECO:0000318"/>
    <property type="project" value="GO_Central"/>
</dbReference>
<dbReference type="InterPro" id="IPR056603">
    <property type="entry name" value="HTH_NPRL3"/>
</dbReference>
<dbReference type="InterPro" id="IPR005365">
    <property type="entry name" value="Npr3"/>
</dbReference>
<dbReference type="PANTHER" id="PTHR13153">
    <property type="entry name" value="CGTHBA PROTEIN -14 GENE PROTEIN"/>
    <property type="match status" value="1"/>
</dbReference>
<dbReference type="PANTHER" id="PTHR13153:SF5">
    <property type="entry name" value="GATOR COMPLEX PROTEIN NPRL3"/>
    <property type="match status" value="1"/>
</dbReference>
<dbReference type="Pfam" id="PF24064">
    <property type="entry name" value="HTH_NPRL3"/>
    <property type="match status" value="1"/>
</dbReference>
<dbReference type="Pfam" id="PF03666">
    <property type="entry name" value="NPR3"/>
    <property type="match status" value="1"/>
</dbReference>
<gene>
    <name type="ORF">SPBC543.04</name>
</gene>
<keyword id="KW-1185">Reference proteome</keyword>
<organism>
    <name type="scientific">Schizosaccharomyces pombe (strain 972 / ATCC 24843)</name>
    <name type="common">Fission yeast</name>
    <dbReference type="NCBI Taxonomy" id="284812"/>
    <lineage>
        <taxon>Eukaryota</taxon>
        <taxon>Fungi</taxon>
        <taxon>Dikarya</taxon>
        <taxon>Ascomycota</taxon>
        <taxon>Taphrinomycotina</taxon>
        <taxon>Schizosaccharomycetes</taxon>
        <taxon>Schizosaccharomycetales</taxon>
        <taxon>Schizosaccharomycetaceae</taxon>
        <taxon>Schizosaccharomyces</taxon>
    </lineage>
</organism>
<sequence>MVRLTPRLVAIFLVEKTTSGANFVFHWPLQPQVRLQATHHNNDSAESAIGMLDLDDSDDDENNRFTEVADDTHVLGYEKGFLANMLSPRIELCNQKFEIWVDGLTFLGCPVHIGPNGEWAKRRKPRTTVESNASSSHLVSKPESSHPSTGSFEVKSSSSKSRSSMSLFHVVFVLNVPTATVYRPTVNTMYDHIVVKLVTGLKYEQAKRNYVENECIHILKLTEKYSSQNVPFDVYAAQIPHHSNLASVLATTYEALINMHTAYLEINQSINLSLLWPMSVSTNTLENYELQVRPSTILASQTIFSEEHPSSIEPFVAPYWTLLLLKDTDTIMKRVPLLQNSLLSSFIAIVKPNLTFTDIANRLGISVSECFILAKHLIHWRKAIAIPPLLIRNTYVTSPTANLFNLEEESKLFKKEFPSLPSLSTFLAILSFKPRPFASIIPSKDHELVYLEMLAWLCRRNWVYEQNIYMYILVPEEIKKKAIALIESDESSKNDMQLRKQLEQDNGKESIIIDPHSASLLEQKWIQIIAYERGPEMAPLFTSIVKYLNGRFALQTIWVAEGLPRKLMRNILNEYNDYILRWHSW</sequence>
<reference key="1">
    <citation type="journal article" date="2002" name="Nature">
        <title>The genome sequence of Schizosaccharomyces pombe.</title>
        <authorList>
            <person name="Wood V."/>
            <person name="Gwilliam R."/>
            <person name="Rajandream M.A."/>
            <person name="Lyne M.H."/>
            <person name="Lyne R."/>
            <person name="Stewart A."/>
            <person name="Sgouros J.G."/>
            <person name="Peat N."/>
            <person name="Hayles J."/>
            <person name="Baker S.G."/>
            <person name="Basham D."/>
            <person name="Bowman S."/>
            <person name="Brooks K."/>
            <person name="Brown D."/>
            <person name="Brown S."/>
            <person name="Chillingworth T."/>
            <person name="Churcher C.M."/>
            <person name="Collins M."/>
            <person name="Connor R."/>
            <person name="Cronin A."/>
            <person name="Davis P."/>
            <person name="Feltwell T."/>
            <person name="Fraser A."/>
            <person name="Gentles S."/>
            <person name="Goble A."/>
            <person name="Hamlin N."/>
            <person name="Harris D.E."/>
            <person name="Hidalgo J."/>
            <person name="Hodgson G."/>
            <person name="Holroyd S."/>
            <person name="Hornsby T."/>
            <person name="Howarth S."/>
            <person name="Huckle E.J."/>
            <person name="Hunt S."/>
            <person name="Jagels K."/>
            <person name="James K.D."/>
            <person name="Jones L."/>
            <person name="Jones M."/>
            <person name="Leather S."/>
            <person name="McDonald S."/>
            <person name="McLean J."/>
            <person name="Mooney P."/>
            <person name="Moule S."/>
            <person name="Mungall K.L."/>
            <person name="Murphy L.D."/>
            <person name="Niblett D."/>
            <person name="Odell C."/>
            <person name="Oliver K."/>
            <person name="O'Neil S."/>
            <person name="Pearson D."/>
            <person name="Quail M.A."/>
            <person name="Rabbinowitsch E."/>
            <person name="Rutherford K.M."/>
            <person name="Rutter S."/>
            <person name="Saunders D."/>
            <person name="Seeger K."/>
            <person name="Sharp S."/>
            <person name="Skelton J."/>
            <person name="Simmonds M.N."/>
            <person name="Squares R."/>
            <person name="Squares S."/>
            <person name="Stevens K."/>
            <person name="Taylor K."/>
            <person name="Taylor R.G."/>
            <person name="Tivey A."/>
            <person name="Walsh S.V."/>
            <person name="Warren T."/>
            <person name="Whitehead S."/>
            <person name="Woodward J.R."/>
            <person name="Volckaert G."/>
            <person name="Aert R."/>
            <person name="Robben J."/>
            <person name="Grymonprez B."/>
            <person name="Weltjens I."/>
            <person name="Vanstreels E."/>
            <person name="Rieger M."/>
            <person name="Schaefer M."/>
            <person name="Mueller-Auer S."/>
            <person name="Gabel C."/>
            <person name="Fuchs M."/>
            <person name="Duesterhoeft A."/>
            <person name="Fritzc C."/>
            <person name="Holzer E."/>
            <person name="Moestl D."/>
            <person name="Hilbert H."/>
            <person name="Borzym K."/>
            <person name="Langer I."/>
            <person name="Beck A."/>
            <person name="Lehrach H."/>
            <person name="Reinhardt R."/>
            <person name="Pohl T.M."/>
            <person name="Eger P."/>
            <person name="Zimmermann W."/>
            <person name="Wedler H."/>
            <person name="Wambutt R."/>
            <person name="Purnelle B."/>
            <person name="Goffeau A."/>
            <person name="Cadieu E."/>
            <person name="Dreano S."/>
            <person name="Gloux S."/>
            <person name="Lelaure V."/>
            <person name="Mottier S."/>
            <person name="Galibert F."/>
            <person name="Aves S.J."/>
            <person name="Xiang Z."/>
            <person name="Hunt C."/>
            <person name="Moore K."/>
            <person name="Hurst S.M."/>
            <person name="Lucas M."/>
            <person name="Rochet M."/>
            <person name="Gaillardin C."/>
            <person name="Tallada V.A."/>
            <person name="Garzon A."/>
            <person name="Thode G."/>
            <person name="Daga R.R."/>
            <person name="Cruzado L."/>
            <person name="Jimenez J."/>
            <person name="Sanchez M."/>
            <person name="del Rey F."/>
            <person name="Benito J."/>
            <person name="Dominguez A."/>
            <person name="Revuelta J.L."/>
            <person name="Moreno S."/>
            <person name="Armstrong J."/>
            <person name="Forsburg S.L."/>
            <person name="Cerutti L."/>
            <person name="Lowe T."/>
            <person name="McCombie W.R."/>
            <person name="Paulsen I."/>
            <person name="Potashkin J."/>
            <person name="Shpakovski G.V."/>
            <person name="Ussery D."/>
            <person name="Barrell B.G."/>
            <person name="Nurse P."/>
        </authorList>
    </citation>
    <scope>NUCLEOTIDE SEQUENCE [LARGE SCALE GENOMIC DNA]</scope>
    <source>
        <strain>972 / ATCC 24843</strain>
    </source>
</reference>
<accession>Q9HGM7</accession>
<comment type="similarity">
    <text evidence="2">Belongs to the NPR3 family.</text>
</comment>
<proteinExistence type="inferred from homology"/>
<evidence type="ECO:0000256" key="1">
    <source>
        <dbReference type="SAM" id="MobiDB-lite"/>
    </source>
</evidence>
<evidence type="ECO:0000305" key="2"/>
<name>NPRL3_SCHPO</name>
<protein>
    <recommendedName>
        <fullName>Nitrogen permease regulator 3-like protein</fullName>
    </recommendedName>
</protein>